<evidence type="ECO:0000250" key="1"/>
<evidence type="ECO:0000255" key="2"/>
<evidence type="ECO:0000256" key="3">
    <source>
        <dbReference type="SAM" id="MobiDB-lite"/>
    </source>
</evidence>
<evidence type="ECO:0000305" key="4"/>
<proteinExistence type="inferred from homology"/>
<name>PRM1_BOTFB</name>
<feature type="chain" id="PRO_0000337273" description="Plasma membrane fusion protein prm1">
    <location>
        <begin position="1"/>
        <end position="794"/>
    </location>
</feature>
<feature type="topological domain" description="Extracellular" evidence="1">
    <location>
        <begin position="1"/>
        <end position="66"/>
    </location>
</feature>
<feature type="transmembrane region" description="Helical" evidence="2">
    <location>
        <begin position="67"/>
        <end position="87"/>
    </location>
</feature>
<feature type="topological domain" description="Cytoplasmic" evidence="1">
    <location>
        <begin position="88"/>
        <end position="149"/>
    </location>
</feature>
<feature type="transmembrane region" description="Helical" evidence="2">
    <location>
        <begin position="150"/>
        <end position="170"/>
    </location>
</feature>
<feature type="topological domain" description="Extracellular" evidence="1">
    <location>
        <begin position="171"/>
        <end position="332"/>
    </location>
</feature>
<feature type="transmembrane region" description="Helical" evidence="2">
    <location>
        <begin position="333"/>
        <end position="353"/>
    </location>
</feature>
<feature type="topological domain" description="Cytoplasmic" evidence="1">
    <location>
        <begin position="354"/>
        <end position="421"/>
    </location>
</feature>
<feature type="transmembrane region" description="Helical" evidence="2">
    <location>
        <begin position="422"/>
        <end position="442"/>
    </location>
</feature>
<feature type="topological domain" description="Extracellular" evidence="1">
    <location>
        <begin position="443"/>
        <end position="622"/>
    </location>
</feature>
<feature type="transmembrane region" description="Helical" evidence="2">
    <location>
        <begin position="623"/>
        <end position="643"/>
    </location>
</feature>
<feature type="topological domain" description="Cytoplasmic" evidence="1">
    <location>
        <begin position="644"/>
        <end position="794"/>
    </location>
</feature>
<feature type="region of interest" description="Disordered" evidence="3">
    <location>
        <begin position="9"/>
        <end position="30"/>
    </location>
</feature>
<feature type="region of interest" description="Disordered" evidence="3">
    <location>
        <begin position="756"/>
        <end position="794"/>
    </location>
</feature>
<feature type="compositionally biased region" description="Polar residues" evidence="3">
    <location>
        <begin position="11"/>
        <end position="27"/>
    </location>
</feature>
<feature type="compositionally biased region" description="Basic and acidic residues" evidence="3">
    <location>
        <begin position="756"/>
        <end position="768"/>
    </location>
</feature>
<feature type="glycosylation site" description="N-linked (GlcNAc...) asparagine" evidence="2">
    <location>
        <position position="21"/>
    </location>
</feature>
<feature type="glycosylation site" description="N-linked (GlcNAc...) asparagine" evidence="2">
    <location>
        <position position="189"/>
    </location>
</feature>
<feature type="glycosylation site" description="N-linked (GlcNAc...) asparagine" evidence="2">
    <location>
        <position position="259"/>
    </location>
</feature>
<feature type="glycosylation site" description="N-linked (GlcNAc...) asparagine" evidence="2">
    <location>
        <position position="270"/>
    </location>
</feature>
<feature type="glycosylation site" description="N-linked (GlcNAc...) asparagine" evidence="2">
    <location>
        <position position="288"/>
    </location>
</feature>
<feature type="glycosylation site" description="N-linked (GlcNAc...) asparagine" evidence="2">
    <location>
        <position position="469"/>
    </location>
</feature>
<feature type="glycosylation site" description="N-linked (GlcNAc...) asparagine" evidence="2">
    <location>
        <position position="483"/>
    </location>
</feature>
<feature type="glycosylation site" description="N-linked (GlcNAc...) asparagine" evidence="2">
    <location>
        <position position="498"/>
    </location>
</feature>
<feature type="glycosylation site" description="N-linked (GlcNAc...) asparagine" evidence="2">
    <location>
        <position position="505"/>
    </location>
</feature>
<feature type="glycosylation site" description="N-linked (GlcNAc...) asparagine" evidence="2">
    <location>
        <position position="520"/>
    </location>
</feature>
<feature type="glycosylation site" description="N-linked (GlcNAc...) asparagine" evidence="2">
    <location>
        <position position="580"/>
    </location>
</feature>
<sequence>MDAFKGYIASQKIQHSHAPSNDSSINSGHEMHPYGVNRNINAAPADDYYTPYLGLRARLSQTWINRWTVLLLLIIVRLLISLAGIKGDVASAKTEALSACSSVENVGSAMASMPHYLSQGVNSMAAAGITKAVNGMMQMLYMSLTGVEEIVLFVIHMMTSTYMCLITLAITGSLQVAIQMIEDVGAFMNKSIDTITGDMSSGLKSFEDDLNGFLSKINIGGIFGSSTSPPTIDLSSEINKLNSIQIDPTTMDADLAKLNASLPTFEQVQNFTDNIIKLPFEEVKKLVNESMIAYKFDDSVFPVPQKKSLTFCSDNTAIQDFFVGLVKTLDTAKKIILIVLVIAAILACIPMAFREIWGWRVMQIQAALLKSRSYTNEMDILYQAHRPYTSQFGLKLSRRFKGQKNQILARWFIAYATSIPALFVLALGLAGLFTCLCQFIVLKTLEKEIPALTAEVGDFAEHVVKALNNASESWALGANSVINNTNTEINDNVFGWVNTTTGAINETLNVFTDEMTKALNVTFGGTILYKPIMGVFECLVGLKIAGIEKGLTWVSDNAHVEFPEFQPDVFSLGAAASLSNTTADDNFLANPATSTTDEITNAVVKVGKKLEAVIRQEALISTALVAIYFVIVLIGLVHVIIGMCGRDKSRGEGGSAPTPLYRNTDVEAPNQHLPEISREKFGTSGNDGWHQEHMRAGGDPITRMPFGGGDGAADDLPYNGAPAPTYEASIAPTERLGVVPAGRVNTNRGPWVRDEKSRELWEADDMQRRATSSYGHLEGGDEKSSGWGVPPRRI</sequence>
<dbReference type="EMBL" id="CP009818">
    <property type="protein sequence ID" value="ATZ57398.1"/>
    <property type="status" value="ALT_INIT"/>
    <property type="molecule type" value="Genomic_DNA"/>
</dbReference>
<dbReference type="EMBL" id="CP009818">
    <property type="protein sequence ID" value="ATZ57399.1"/>
    <property type="status" value="ALT_INIT"/>
    <property type="molecule type" value="Genomic_DNA"/>
</dbReference>
<dbReference type="RefSeq" id="XP_001550235.1">
    <property type="nucleotide sequence ID" value="XM_001550185.1"/>
</dbReference>
<dbReference type="SMR" id="A6SEV8"/>
<dbReference type="GlyCosmos" id="A6SEV8">
    <property type="glycosylation" value="11 sites, No reported glycans"/>
</dbReference>
<dbReference type="EnsemblFungi" id="Bcin14g05420.1">
    <property type="protein sequence ID" value="Bcin14p05420.1"/>
    <property type="gene ID" value="Bcin14g05420"/>
</dbReference>
<dbReference type="EnsemblFungi" id="Bcin14g05420.2">
    <property type="protein sequence ID" value="Bcin14p05420.2"/>
    <property type="gene ID" value="Bcin14g05420"/>
</dbReference>
<dbReference type="VEuPathDB" id="FungiDB:Bcin14g05420"/>
<dbReference type="OMA" id="NVFGWVN"/>
<dbReference type="OrthoDB" id="5356111at2759"/>
<dbReference type="Proteomes" id="UP000001798">
    <property type="component" value="Chromosome bcin14"/>
</dbReference>
<dbReference type="GO" id="GO:0043332">
    <property type="term" value="C:mating projection tip"/>
    <property type="evidence" value="ECO:0007669"/>
    <property type="project" value="InterPro"/>
</dbReference>
<dbReference type="GO" id="GO:0005886">
    <property type="term" value="C:plasma membrane"/>
    <property type="evidence" value="ECO:0007669"/>
    <property type="project" value="UniProtKB-SubCell"/>
</dbReference>
<dbReference type="GO" id="GO:0032220">
    <property type="term" value="P:plasma membrane fusion involved in cytogamy"/>
    <property type="evidence" value="ECO:0007669"/>
    <property type="project" value="TreeGrafter"/>
</dbReference>
<dbReference type="InterPro" id="IPR026777">
    <property type="entry name" value="PRM1"/>
</dbReference>
<dbReference type="PANTHER" id="PTHR31030">
    <property type="entry name" value="PLASMA MEMBRANE FUSION PROTEIN PRM1"/>
    <property type="match status" value="1"/>
</dbReference>
<dbReference type="PANTHER" id="PTHR31030:SF1">
    <property type="entry name" value="PLASMA MEMBRANE FUSION PROTEIN PRM1"/>
    <property type="match status" value="1"/>
</dbReference>
<organism>
    <name type="scientific">Botryotinia fuckeliana (strain B05.10)</name>
    <name type="common">Noble rot fungus</name>
    <name type="synonym">Botrytis cinerea</name>
    <dbReference type="NCBI Taxonomy" id="332648"/>
    <lineage>
        <taxon>Eukaryota</taxon>
        <taxon>Fungi</taxon>
        <taxon>Dikarya</taxon>
        <taxon>Ascomycota</taxon>
        <taxon>Pezizomycotina</taxon>
        <taxon>Leotiomycetes</taxon>
        <taxon>Helotiales</taxon>
        <taxon>Sclerotiniaceae</taxon>
        <taxon>Botrytis</taxon>
    </lineage>
</organism>
<reference key="1">
    <citation type="journal article" date="2011" name="PLoS Genet.">
        <title>Genomic analysis of the necrotrophic fungal pathogens Sclerotinia sclerotiorum and Botrytis cinerea.</title>
        <authorList>
            <person name="Amselem J."/>
            <person name="Cuomo C.A."/>
            <person name="van Kan J.A.L."/>
            <person name="Viaud M."/>
            <person name="Benito E.P."/>
            <person name="Couloux A."/>
            <person name="Coutinho P.M."/>
            <person name="de Vries R.P."/>
            <person name="Dyer P.S."/>
            <person name="Fillinger S."/>
            <person name="Fournier E."/>
            <person name="Gout L."/>
            <person name="Hahn M."/>
            <person name="Kohn L."/>
            <person name="Lapalu N."/>
            <person name="Plummer K.M."/>
            <person name="Pradier J.-M."/>
            <person name="Quevillon E."/>
            <person name="Sharon A."/>
            <person name="Simon A."/>
            <person name="ten Have A."/>
            <person name="Tudzynski B."/>
            <person name="Tudzynski P."/>
            <person name="Wincker P."/>
            <person name="Andrew M."/>
            <person name="Anthouard V."/>
            <person name="Beever R.E."/>
            <person name="Beffa R."/>
            <person name="Benoit I."/>
            <person name="Bouzid O."/>
            <person name="Brault B."/>
            <person name="Chen Z."/>
            <person name="Choquer M."/>
            <person name="Collemare J."/>
            <person name="Cotton P."/>
            <person name="Danchin E.G."/>
            <person name="Da Silva C."/>
            <person name="Gautier A."/>
            <person name="Giraud C."/>
            <person name="Giraud T."/>
            <person name="Gonzalez C."/>
            <person name="Grossetete S."/>
            <person name="Gueldener U."/>
            <person name="Henrissat B."/>
            <person name="Howlett B.J."/>
            <person name="Kodira C."/>
            <person name="Kretschmer M."/>
            <person name="Lappartient A."/>
            <person name="Leroch M."/>
            <person name="Levis C."/>
            <person name="Mauceli E."/>
            <person name="Neuveglise C."/>
            <person name="Oeser B."/>
            <person name="Pearson M."/>
            <person name="Poulain J."/>
            <person name="Poussereau N."/>
            <person name="Quesneville H."/>
            <person name="Rascle C."/>
            <person name="Schumacher J."/>
            <person name="Segurens B."/>
            <person name="Sexton A."/>
            <person name="Silva E."/>
            <person name="Sirven C."/>
            <person name="Soanes D.M."/>
            <person name="Talbot N.J."/>
            <person name="Templeton M."/>
            <person name="Yandava C."/>
            <person name="Yarden O."/>
            <person name="Zeng Q."/>
            <person name="Rollins J.A."/>
            <person name="Lebrun M.-H."/>
            <person name="Dickman M."/>
        </authorList>
    </citation>
    <scope>NUCLEOTIDE SEQUENCE [LARGE SCALE GENOMIC DNA]</scope>
    <source>
        <strain>B05.10</strain>
    </source>
</reference>
<reference key="2">
    <citation type="journal article" date="2012" name="Eukaryot. Cell">
        <title>Genome update of Botrytis cinerea strains B05.10 and T4.</title>
        <authorList>
            <person name="Staats M."/>
            <person name="van Kan J.A.L."/>
        </authorList>
    </citation>
    <scope>NUCLEOTIDE SEQUENCE [LARGE SCALE GENOMIC DNA]</scope>
    <scope>GENOME REANNOTATION</scope>
    <source>
        <strain>B05.10</strain>
    </source>
</reference>
<reference key="3">
    <citation type="journal article" date="2017" name="Mol. Plant Pathol.">
        <title>A gapless genome sequence of the fungus Botrytis cinerea.</title>
        <authorList>
            <person name="van Kan J.A.L."/>
            <person name="Stassen J.H.M."/>
            <person name="Mosbach A."/>
            <person name="van der Lee T.A.J."/>
            <person name="Faino L."/>
            <person name="Farmer A.D."/>
            <person name="Papasotiriou D.G."/>
            <person name="Zhou S."/>
            <person name="Seidl M.F."/>
            <person name="Cottam E."/>
            <person name="Edel D."/>
            <person name="Hahn M."/>
            <person name="Schwartz D.C."/>
            <person name="Dietrich R.A."/>
            <person name="Widdison S."/>
            <person name="Scalliet G."/>
        </authorList>
    </citation>
    <scope>NUCLEOTIDE SEQUENCE [LARGE SCALE GENOMIC DNA]</scope>
    <scope>GENOME REANNOTATION</scope>
    <source>
        <strain>B05.10</strain>
    </source>
</reference>
<protein>
    <recommendedName>
        <fullName>Plasma membrane fusion protein prm1</fullName>
    </recommendedName>
</protein>
<comment type="function">
    <text evidence="1">Involved in cell fusion during mating by stabilizing the plasma membrane fusion event.</text>
</comment>
<comment type="subcellular location">
    <subcellularLocation>
        <location evidence="1">Cell membrane</location>
        <topology evidence="1">Multi-pass membrane protein</topology>
    </subcellularLocation>
</comment>
<comment type="similarity">
    <text evidence="4">Belongs to the PRM1 family.</text>
</comment>
<comment type="sequence caution" evidence="4">
    <conflict type="erroneous initiation">
        <sequence resource="EMBL-CDS" id="ATZ57398"/>
    </conflict>
    <text>Truncated N-terminus.</text>
</comment>
<comment type="sequence caution" evidence="4">
    <conflict type="erroneous initiation">
        <sequence resource="EMBL-CDS" id="ATZ57399"/>
    </conflict>
    <text>Truncated N-terminus.</text>
</comment>
<keyword id="KW-1003">Cell membrane</keyword>
<keyword id="KW-0184">Conjugation</keyword>
<keyword id="KW-0325">Glycoprotein</keyword>
<keyword id="KW-0472">Membrane</keyword>
<keyword id="KW-1185">Reference proteome</keyword>
<keyword id="KW-0812">Transmembrane</keyword>
<keyword id="KW-1133">Transmembrane helix</keyword>
<accession>A6SEV8</accession>
<accession>A0A384K3N1</accession>
<gene>
    <name type="primary">prm1</name>
    <name type="ORF">BC1G_10779</name>
    <name type="ORF">BCIN_14g05420</name>
</gene>